<feature type="signal peptide" evidence="1">
    <location>
        <begin position="1"/>
        <end position="20"/>
    </location>
</feature>
<feature type="chain" id="PRO_0000015496" description="Interleukin-2">
    <location>
        <begin position="21"/>
        <end position="154"/>
    </location>
</feature>
<feature type="glycosylation site" description="O-linked (GalNAc...) threonine" evidence="1">
    <location>
        <position position="23"/>
    </location>
</feature>
<feature type="disulfide bond" evidence="1">
    <location>
        <begin position="78"/>
        <end position="126"/>
    </location>
</feature>
<name>IL2_PAPAN</name>
<organism>
    <name type="scientific">Papio anubis</name>
    <name type="common">Olive baboon</name>
    <dbReference type="NCBI Taxonomy" id="9555"/>
    <lineage>
        <taxon>Eukaryota</taxon>
        <taxon>Metazoa</taxon>
        <taxon>Chordata</taxon>
        <taxon>Craniata</taxon>
        <taxon>Vertebrata</taxon>
        <taxon>Euteleostomi</taxon>
        <taxon>Mammalia</taxon>
        <taxon>Eutheria</taxon>
        <taxon>Euarchontoglires</taxon>
        <taxon>Primates</taxon>
        <taxon>Haplorrhini</taxon>
        <taxon>Catarrhini</taxon>
        <taxon>Cercopithecidae</taxon>
        <taxon>Cercopithecinae</taxon>
        <taxon>Papio</taxon>
    </lineage>
</organism>
<keyword id="KW-1064">Adaptive immunity</keyword>
<keyword id="KW-0202">Cytokine</keyword>
<keyword id="KW-1015">Disulfide bond</keyword>
<keyword id="KW-0325">Glycoprotein</keyword>
<keyword id="KW-0339">Growth factor</keyword>
<keyword id="KW-0391">Immunity</keyword>
<keyword id="KW-1185">Reference proteome</keyword>
<keyword id="KW-0964">Secreted</keyword>
<keyword id="KW-0732">Signal</keyword>
<sequence>MYRMQLLSCIALSLALVTNSAPTSSSTKKTQLQLEHLLLDLQMILNGINNYKNPKLTRMLTFKFYMPKKATELKHLQCLEEELRPLEEVLNLAQSKNFHLRDTKDLISNINVIVLELKGSETTLMCEYADETATIVEFLNRWITFCQSIISTLT</sequence>
<dbReference type="EMBL" id="AY234220">
    <property type="protein sequence ID" value="AAO85333.1"/>
    <property type="molecule type" value="mRNA"/>
</dbReference>
<dbReference type="RefSeq" id="NP_001106124.1">
    <property type="nucleotide sequence ID" value="NM_001112654.1"/>
</dbReference>
<dbReference type="SMR" id="Q865Y1"/>
<dbReference type="STRING" id="9555.ENSPANP00000003021"/>
<dbReference type="GlyCosmos" id="Q865Y1">
    <property type="glycosylation" value="1 site, No reported glycans"/>
</dbReference>
<dbReference type="GeneID" id="100126754"/>
<dbReference type="KEGG" id="panu:100126754"/>
<dbReference type="CTD" id="3558"/>
<dbReference type="eggNOG" id="ENOG502RVR5">
    <property type="taxonomic scope" value="Eukaryota"/>
</dbReference>
<dbReference type="OrthoDB" id="14178at314294"/>
<dbReference type="Proteomes" id="UP000028761">
    <property type="component" value="Unplaced"/>
</dbReference>
<dbReference type="GO" id="GO:0005615">
    <property type="term" value="C:extracellular space"/>
    <property type="evidence" value="ECO:0007669"/>
    <property type="project" value="UniProtKB-KW"/>
</dbReference>
<dbReference type="GO" id="GO:0005125">
    <property type="term" value="F:cytokine activity"/>
    <property type="evidence" value="ECO:0007669"/>
    <property type="project" value="UniProtKB-KW"/>
</dbReference>
<dbReference type="GO" id="GO:0008083">
    <property type="term" value="F:growth factor activity"/>
    <property type="evidence" value="ECO:0007669"/>
    <property type="project" value="UniProtKB-KW"/>
</dbReference>
<dbReference type="GO" id="GO:0005134">
    <property type="term" value="F:interleukin-2 receptor binding"/>
    <property type="evidence" value="ECO:0007669"/>
    <property type="project" value="InterPro"/>
</dbReference>
<dbReference type="GO" id="GO:0002250">
    <property type="term" value="P:adaptive immune response"/>
    <property type="evidence" value="ECO:0007669"/>
    <property type="project" value="UniProtKB-KW"/>
</dbReference>
<dbReference type="FunFam" id="1.20.1250.10:FF:000025">
    <property type="entry name" value="Interleukin-2"/>
    <property type="match status" value="1"/>
</dbReference>
<dbReference type="Gene3D" id="1.20.1250.10">
    <property type="match status" value="1"/>
</dbReference>
<dbReference type="InterPro" id="IPR009079">
    <property type="entry name" value="4_helix_cytokine-like_core"/>
</dbReference>
<dbReference type="InterPro" id="IPR000779">
    <property type="entry name" value="IL-2"/>
</dbReference>
<dbReference type="InterPro" id="IPR030477">
    <property type="entry name" value="IL-2_CS"/>
</dbReference>
<dbReference type="PANTHER" id="PTHR48487">
    <property type="entry name" value="INTERLEUKIN-2"/>
    <property type="match status" value="1"/>
</dbReference>
<dbReference type="PANTHER" id="PTHR48487:SF1">
    <property type="entry name" value="INTERLEUKIN-2"/>
    <property type="match status" value="1"/>
</dbReference>
<dbReference type="Pfam" id="PF00715">
    <property type="entry name" value="IL2"/>
    <property type="match status" value="1"/>
</dbReference>
<dbReference type="PRINTS" id="PR00265">
    <property type="entry name" value="INTERLEUKIN2"/>
</dbReference>
<dbReference type="SMART" id="SM00189">
    <property type="entry name" value="IL2"/>
    <property type="match status" value="1"/>
</dbReference>
<dbReference type="SUPFAM" id="SSF47266">
    <property type="entry name" value="4-helical cytokines"/>
    <property type="match status" value="1"/>
</dbReference>
<dbReference type="PROSITE" id="PS00424">
    <property type="entry name" value="INTERLEUKIN_2"/>
    <property type="match status" value="1"/>
</dbReference>
<comment type="function">
    <text evidence="2">Cytokine produced by activated CD4-positive helper T-cells and to a lesser extend activated CD8-positive T-cells and natural killer (NK) cells that plays pivotal roles in the immune response and tolerance. Binds to a receptor complex composed of either the high-affinity trimeric IL-2R (IL2RA/CD25, IL2RB/CD122 and IL2RG/CD132) or the low-affinity dimeric IL-2R (IL2RB and IL2RG). Interaction with the receptor leads to oligomerization and conformation changes in the IL-2R subunits resulting in downstream signaling starting with phosphorylation of JAK1 and JAK3. In turn, JAK1 and JAK3 phosphorylate the receptor to form a docking site leading to the phosphorylation of several substrates including STAT5. This process leads to activation of several pathways including STAT, phosphoinositide-3-kinase/PI3K and mitogen-activated protein kinase/MAPK pathways. Functions as a T-cell growth factor and can increase NK-cell cytolytic activity as well. Promotes strong proliferation of activated B-cells and subsequently immunoglobulin production. Plays a pivotal role in regulating the adaptive immune system by controlling the survival and proliferation of regulatory T-cells, which are required for the maintenance of immune tolerance. Moreover, participates in the differentiation and homeostasis of effector T-cell subsets, including Th1, Th2, Th17 as well as memory CD8-positive T-cells.</text>
</comment>
<comment type="subcellular location">
    <subcellularLocation>
        <location>Secreted</location>
    </subcellularLocation>
</comment>
<comment type="similarity">
    <text evidence="3">Belongs to the IL-2 family.</text>
</comment>
<evidence type="ECO:0000250" key="1"/>
<evidence type="ECO:0000250" key="2">
    <source>
        <dbReference type="UniProtKB" id="P60568"/>
    </source>
</evidence>
<evidence type="ECO:0000305" key="3"/>
<accession>Q865Y1</accession>
<protein>
    <recommendedName>
        <fullName>Interleukin-2</fullName>
        <shortName>IL-2</shortName>
    </recommendedName>
    <alternativeName>
        <fullName>T-cell growth factor</fullName>
        <shortName>TCGF</shortName>
    </alternativeName>
</protein>
<proteinExistence type="evidence at transcript level"/>
<gene>
    <name type="primary">IL2</name>
    <name type="synonym">IL-2</name>
</gene>
<reference key="1">
    <citation type="submission" date="2003-02" db="EMBL/GenBank/DDBJ databases">
        <title>Nonhuman primate cytokines.</title>
        <authorList>
            <person name="Villinger F.J."/>
        </authorList>
    </citation>
    <scope>NUCLEOTIDE SEQUENCE [MRNA]</scope>
</reference>